<sequence>MDLTVEPNLKSLITSSTHKWIFVGGKGGVGKTTSSCSIAIQMALAQPHKKFLLISTDPAHNLSDAFGEKFDKDARKVTGMDNLSCMEIDPSAALKDMNDMAVSSAGENGNDDLGGLLQGGALADLTGSIPGIDEALSFMEVMKHIKKQEQGDGESFDTVIFDTAPTGHTLRFLQLPTTLSKLLDKFSEITGRLGPMLNSMMGSGNVDIAGKLNELKANVETIKEQFTDPDLTTFVCVCISEFLSLYETERLIQELISYDMDVNSIIVNQLLFAEFDQEHNCKRCQSRWKMQKKYLDQIDELYEDFHVVKMPLCAGEIRGLNNLKKFSQFLFKEYDPVADNTVIYELEEKN</sequence>
<proteinExistence type="inferred from homology"/>
<accession>Q6FKZ9</accession>
<reference key="1">
    <citation type="journal article" date="2004" name="Nature">
        <title>Genome evolution in yeasts.</title>
        <authorList>
            <person name="Dujon B."/>
            <person name="Sherman D."/>
            <person name="Fischer G."/>
            <person name="Durrens P."/>
            <person name="Casaregola S."/>
            <person name="Lafontaine I."/>
            <person name="de Montigny J."/>
            <person name="Marck C."/>
            <person name="Neuveglise C."/>
            <person name="Talla E."/>
            <person name="Goffard N."/>
            <person name="Frangeul L."/>
            <person name="Aigle M."/>
            <person name="Anthouard V."/>
            <person name="Babour A."/>
            <person name="Barbe V."/>
            <person name="Barnay S."/>
            <person name="Blanchin S."/>
            <person name="Beckerich J.-M."/>
            <person name="Beyne E."/>
            <person name="Bleykasten C."/>
            <person name="Boisrame A."/>
            <person name="Boyer J."/>
            <person name="Cattolico L."/>
            <person name="Confanioleri F."/>
            <person name="de Daruvar A."/>
            <person name="Despons L."/>
            <person name="Fabre E."/>
            <person name="Fairhead C."/>
            <person name="Ferry-Dumazet H."/>
            <person name="Groppi A."/>
            <person name="Hantraye F."/>
            <person name="Hennequin C."/>
            <person name="Jauniaux N."/>
            <person name="Joyet P."/>
            <person name="Kachouri R."/>
            <person name="Kerrest A."/>
            <person name="Koszul R."/>
            <person name="Lemaire M."/>
            <person name="Lesur I."/>
            <person name="Ma L."/>
            <person name="Muller H."/>
            <person name="Nicaud J.-M."/>
            <person name="Nikolski M."/>
            <person name="Oztas S."/>
            <person name="Ozier-Kalogeropoulos O."/>
            <person name="Pellenz S."/>
            <person name="Potier S."/>
            <person name="Richard G.-F."/>
            <person name="Straub M.-L."/>
            <person name="Suleau A."/>
            <person name="Swennen D."/>
            <person name="Tekaia F."/>
            <person name="Wesolowski-Louvel M."/>
            <person name="Westhof E."/>
            <person name="Wirth B."/>
            <person name="Zeniou-Meyer M."/>
            <person name="Zivanovic Y."/>
            <person name="Bolotin-Fukuhara M."/>
            <person name="Thierry A."/>
            <person name="Bouchier C."/>
            <person name="Caudron B."/>
            <person name="Scarpelli C."/>
            <person name="Gaillardin C."/>
            <person name="Weissenbach J."/>
            <person name="Wincker P."/>
            <person name="Souciet J.-L."/>
        </authorList>
    </citation>
    <scope>NUCLEOTIDE SEQUENCE [LARGE SCALE GENOMIC DNA]</scope>
    <source>
        <strain>ATCC 2001 / BCRC 20586 / JCM 3761 / NBRC 0622 / NRRL Y-65 / CBS 138</strain>
    </source>
</reference>
<gene>
    <name evidence="1" type="primary">GET3</name>
    <name type="ordered locus">CAGL0L07304g</name>
</gene>
<dbReference type="EC" id="3.6.-.-" evidence="1"/>
<dbReference type="EMBL" id="CR380958">
    <property type="protein sequence ID" value="CAG62065.1"/>
    <property type="molecule type" value="Genomic_DNA"/>
</dbReference>
<dbReference type="RefSeq" id="XP_449095.1">
    <property type="nucleotide sequence ID" value="XM_449095.1"/>
</dbReference>
<dbReference type="SMR" id="Q6FKZ9"/>
<dbReference type="FunCoup" id="Q6FKZ9">
    <property type="interactions" value="1042"/>
</dbReference>
<dbReference type="STRING" id="284593.Q6FKZ9"/>
<dbReference type="EnsemblFungi" id="CAGL0L07304g-T">
    <property type="protein sequence ID" value="CAGL0L07304g-T-p1"/>
    <property type="gene ID" value="CAGL0L07304g"/>
</dbReference>
<dbReference type="GeneID" id="2890983"/>
<dbReference type="KEGG" id="cgr:2890983"/>
<dbReference type="CGD" id="CAL0135306">
    <property type="gene designation" value="GET3"/>
</dbReference>
<dbReference type="VEuPathDB" id="FungiDB:B1J91_L07304g"/>
<dbReference type="VEuPathDB" id="FungiDB:CAGL0L07304g"/>
<dbReference type="eggNOG" id="KOG2825">
    <property type="taxonomic scope" value="Eukaryota"/>
</dbReference>
<dbReference type="HOGENOM" id="CLU_040761_0_0_1"/>
<dbReference type="InParanoid" id="Q6FKZ9"/>
<dbReference type="OMA" id="MDAPYEF"/>
<dbReference type="Proteomes" id="UP000002428">
    <property type="component" value="Chromosome L"/>
</dbReference>
<dbReference type="GO" id="GO:0043529">
    <property type="term" value="C:GET complex"/>
    <property type="evidence" value="ECO:0007669"/>
    <property type="project" value="EnsemblFungi"/>
</dbReference>
<dbReference type="GO" id="GO:0005794">
    <property type="term" value="C:Golgi apparatus"/>
    <property type="evidence" value="ECO:0007669"/>
    <property type="project" value="UniProtKB-SubCell"/>
</dbReference>
<dbReference type="GO" id="GO:0005524">
    <property type="term" value="F:ATP binding"/>
    <property type="evidence" value="ECO:0007669"/>
    <property type="project" value="UniProtKB-UniRule"/>
</dbReference>
<dbReference type="GO" id="GO:0016887">
    <property type="term" value="F:ATP hydrolysis activity"/>
    <property type="evidence" value="ECO:0007669"/>
    <property type="project" value="EnsemblFungi"/>
</dbReference>
<dbReference type="GO" id="GO:0005085">
    <property type="term" value="F:guanyl-nucleotide exchange factor activity"/>
    <property type="evidence" value="ECO:0007669"/>
    <property type="project" value="EnsemblFungi"/>
</dbReference>
<dbReference type="GO" id="GO:0042802">
    <property type="term" value="F:identical protein binding"/>
    <property type="evidence" value="ECO:0007669"/>
    <property type="project" value="EnsemblFungi"/>
</dbReference>
<dbReference type="GO" id="GO:0046872">
    <property type="term" value="F:metal ion binding"/>
    <property type="evidence" value="ECO:0007669"/>
    <property type="project" value="UniProtKB-KW"/>
</dbReference>
<dbReference type="GO" id="GO:0044183">
    <property type="term" value="F:protein folding chaperone"/>
    <property type="evidence" value="ECO:0007669"/>
    <property type="project" value="EnsemblFungi"/>
</dbReference>
<dbReference type="GO" id="GO:0051082">
    <property type="term" value="F:unfolded protein binding"/>
    <property type="evidence" value="ECO:0007669"/>
    <property type="project" value="EnsemblFungi"/>
</dbReference>
<dbReference type="GO" id="GO:0034599">
    <property type="term" value="P:cellular response to oxidative stress"/>
    <property type="evidence" value="ECO:0007669"/>
    <property type="project" value="EnsemblFungi"/>
</dbReference>
<dbReference type="GO" id="GO:0000750">
    <property type="term" value="P:pheromone-dependent signal transduction involved in conjugation with cellular fusion"/>
    <property type="evidence" value="ECO:0007669"/>
    <property type="project" value="EnsemblFungi"/>
</dbReference>
<dbReference type="GO" id="GO:0006620">
    <property type="term" value="P:post-translational protein targeting to endoplasmic reticulum membrane"/>
    <property type="evidence" value="ECO:0007669"/>
    <property type="project" value="EnsemblFungi"/>
</dbReference>
<dbReference type="GO" id="GO:0009408">
    <property type="term" value="P:response to heat"/>
    <property type="evidence" value="ECO:0007669"/>
    <property type="project" value="EnsemblFungi"/>
</dbReference>
<dbReference type="GO" id="GO:0010038">
    <property type="term" value="P:response to metal ion"/>
    <property type="evidence" value="ECO:0007669"/>
    <property type="project" value="EnsemblFungi"/>
</dbReference>
<dbReference type="GO" id="GO:0006890">
    <property type="term" value="P:retrograde vesicle-mediated transport, Golgi to endoplasmic reticulum"/>
    <property type="evidence" value="ECO:0007669"/>
    <property type="project" value="EnsemblFungi"/>
</dbReference>
<dbReference type="GO" id="GO:0071816">
    <property type="term" value="P:tail-anchored membrane protein insertion into ER membrane"/>
    <property type="evidence" value="ECO:0007669"/>
    <property type="project" value="EnsemblFungi"/>
</dbReference>
<dbReference type="CDD" id="cd02035">
    <property type="entry name" value="ArsA"/>
    <property type="match status" value="1"/>
</dbReference>
<dbReference type="FunFam" id="3.40.50.300:FF:001359">
    <property type="entry name" value="ATPase GET3"/>
    <property type="match status" value="1"/>
</dbReference>
<dbReference type="Gene3D" id="3.40.50.300">
    <property type="entry name" value="P-loop containing nucleotide triphosphate hydrolases"/>
    <property type="match status" value="1"/>
</dbReference>
<dbReference type="HAMAP" id="MF_03112">
    <property type="entry name" value="Asna1_Get3"/>
    <property type="match status" value="1"/>
</dbReference>
<dbReference type="InterPro" id="IPR025723">
    <property type="entry name" value="Anion-transp_ATPase-like_dom"/>
</dbReference>
<dbReference type="InterPro" id="IPR016300">
    <property type="entry name" value="ATPase_ArsA/GET3"/>
</dbReference>
<dbReference type="InterPro" id="IPR027542">
    <property type="entry name" value="ATPase_ArsA/GET3_euk"/>
</dbReference>
<dbReference type="InterPro" id="IPR027417">
    <property type="entry name" value="P-loop_NTPase"/>
</dbReference>
<dbReference type="NCBIfam" id="TIGR00345">
    <property type="entry name" value="GET3_arsA_TRC40"/>
    <property type="match status" value="1"/>
</dbReference>
<dbReference type="PANTHER" id="PTHR10803">
    <property type="entry name" value="ARSENICAL PUMP-DRIVING ATPASE ARSENITE-TRANSLOCATING ATPASE"/>
    <property type="match status" value="1"/>
</dbReference>
<dbReference type="PANTHER" id="PTHR10803:SF3">
    <property type="entry name" value="ATPASE GET3"/>
    <property type="match status" value="1"/>
</dbReference>
<dbReference type="Pfam" id="PF02374">
    <property type="entry name" value="ArsA_ATPase"/>
    <property type="match status" value="1"/>
</dbReference>
<dbReference type="SUPFAM" id="SSF52540">
    <property type="entry name" value="P-loop containing nucleoside triphosphate hydrolases"/>
    <property type="match status" value="1"/>
</dbReference>
<name>GET3_CANGA</name>
<protein>
    <recommendedName>
        <fullName evidence="1">ATPase GET3</fullName>
        <ecNumber evidence="1">3.6.-.-</ecNumber>
    </recommendedName>
    <alternativeName>
        <fullName evidence="1">Arsenical pump-driving ATPase</fullName>
    </alternativeName>
    <alternativeName>
        <fullName evidence="1">Arsenite-stimulated ATPase</fullName>
    </alternativeName>
    <alternativeName>
        <fullName evidence="1">Golgi to ER traffic protein 3</fullName>
    </alternativeName>
    <alternativeName>
        <fullName evidence="1">Guided entry of tail-anchored proteins 3</fullName>
    </alternativeName>
</protein>
<evidence type="ECO:0000255" key="1">
    <source>
        <dbReference type="HAMAP-Rule" id="MF_03112"/>
    </source>
</evidence>
<feature type="chain" id="PRO_0000388198" description="ATPase GET3">
    <location>
        <begin position="1"/>
        <end position="350"/>
    </location>
</feature>
<feature type="active site" evidence="1">
    <location>
        <position position="57"/>
    </location>
</feature>
<feature type="binding site" evidence="1">
    <location>
        <begin position="26"/>
        <end position="33"/>
    </location>
    <ligand>
        <name>ATP</name>
        <dbReference type="ChEBI" id="CHEBI:30616"/>
    </ligand>
</feature>
<feature type="binding site" evidence="1">
    <location>
        <position position="241"/>
    </location>
    <ligand>
        <name>ATP</name>
        <dbReference type="ChEBI" id="CHEBI:30616"/>
    </ligand>
</feature>
<feature type="binding site" evidence="1">
    <location>
        <position position="268"/>
    </location>
    <ligand>
        <name>ATP</name>
        <dbReference type="ChEBI" id="CHEBI:30616"/>
    </ligand>
</feature>
<feature type="binding site" evidence="1">
    <location>
        <position position="281"/>
    </location>
    <ligand>
        <name>Zn(2+)</name>
        <dbReference type="ChEBI" id="CHEBI:29105"/>
        <note>ligand shared between dimeric partners</note>
    </ligand>
</feature>
<feature type="binding site" evidence="1">
    <location>
        <position position="284"/>
    </location>
    <ligand>
        <name>Zn(2+)</name>
        <dbReference type="ChEBI" id="CHEBI:29105"/>
        <note>ligand shared between dimeric partners</note>
    </ligand>
</feature>
<comment type="function">
    <text evidence="1">ATPase required for the post-translational delivery of tail-anchored (TA) proteins to the endoplasmic reticulum. Recognizes and selectively binds the transmembrane domain of TA proteins in the cytosol. This complex then targets to the endoplasmic reticulum by membrane-bound receptors GET1 and GET2, where the tail-anchored protein is released for insertion. This process is regulated by ATP binding and hydrolysis. ATP binding drives the homodimer towards the closed dimer state, facilitating recognition of newly synthesized TA membrane proteins. ATP hydrolysis is required for insertion. Subsequently, the homodimer reverts towards the open dimer state, lowering its affinity for the GET1-GET2 receptor, and returning it to the cytosol to initiate a new round of targeting. Cooperates with the HDEL receptor ERD2 to mediate the ATP-dependent retrieval of resident ER proteins that contain a C-terminal H-D-E-L retention signal from the Golgi to the ER. Involved in low-level resistance to the oxyanions arsenite and arsenate, and in heat tolerance.</text>
</comment>
<comment type="subunit">
    <text evidence="1">Homodimer. Component of the Golgi to ER traffic (GET) complex, which is composed of GET1, GET2 and GET3. Within the complex, GET1 and GET2 form a heterotetramer which is stabilized by phosphatidylinositol binding and which binds to the GET3 homodimer. Interacts with the chloride channel protein GEF1.</text>
</comment>
<comment type="subcellular location">
    <subcellularLocation>
        <location evidence="1">Cytoplasm</location>
    </subcellularLocation>
    <subcellularLocation>
        <location evidence="1">Endoplasmic reticulum</location>
    </subcellularLocation>
    <subcellularLocation>
        <location evidence="1">Golgi apparatus</location>
    </subcellularLocation>
    <text evidence="1">GET1 and GET2 are required for targeting GET3 to the endoplasmic reticulum.</text>
</comment>
<comment type="similarity">
    <text evidence="1">Belongs to the arsA ATPase family.</text>
</comment>
<keyword id="KW-0067">ATP-binding</keyword>
<keyword id="KW-0963">Cytoplasm</keyword>
<keyword id="KW-0256">Endoplasmic reticulum</keyword>
<keyword id="KW-0333">Golgi apparatus</keyword>
<keyword id="KW-0378">Hydrolase</keyword>
<keyword id="KW-0479">Metal-binding</keyword>
<keyword id="KW-0547">Nucleotide-binding</keyword>
<keyword id="KW-1185">Reference proteome</keyword>
<keyword id="KW-0813">Transport</keyword>
<keyword id="KW-0862">Zinc</keyword>
<organism>
    <name type="scientific">Candida glabrata (strain ATCC 2001 / BCRC 20586 / JCM 3761 / NBRC 0622 / NRRL Y-65 / CBS 138)</name>
    <name type="common">Yeast</name>
    <name type="synonym">Nakaseomyces glabratus</name>
    <dbReference type="NCBI Taxonomy" id="284593"/>
    <lineage>
        <taxon>Eukaryota</taxon>
        <taxon>Fungi</taxon>
        <taxon>Dikarya</taxon>
        <taxon>Ascomycota</taxon>
        <taxon>Saccharomycotina</taxon>
        <taxon>Saccharomycetes</taxon>
        <taxon>Saccharomycetales</taxon>
        <taxon>Saccharomycetaceae</taxon>
        <taxon>Nakaseomyces</taxon>
    </lineage>
</organism>